<keyword id="KW-0963">Cytoplasm</keyword>
<keyword id="KW-0539">Nucleus</keyword>
<keyword id="KW-0560">Oxidoreductase</keyword>
<keyword id="KW-1185">Reference proteome</keyword>
<organism>
    <name type="scientific">Schizosaccharomyces pombe (strain 972 / ATCC 24843)</name>
    <name type="common">Fission yeast</name>
    <dbReference type="NCBI Taxonomy" id="284812"/>
    <lineage>
        <taxon>Eukaryota</taxon>
        <taxon>Fungi</taxon>
        <taxon>Dikarya</taxon>
        <taxon>Ascomycota</taxon>
        <taxon>Taphrinomycotina</taxon>
        <taxon>Schizosaccharomycetes</taxon>
        <taxon>Schizosaccharomycetales</taxon>
        <taxon>Schizosaccharomycetaceae</taxon>
        <taxon>Schizosaccharomyces</taxon>
    </lineage>
</organism>
<reference key="1">
    <citation type="journal article" date="2002" name="Nature">
        <title>The genome sequence of Schizosaccharomyces pombe.</title>
        <authorList>
            <person name="Wood V."/>
            <person name="Gwilliam R."/>
            <person name="Rajandream M.A."/>
            <person name="Lyne M.H."/>
            <person name="Lyne R."/>
            <person name="Stewart A."/>
            <person name="Sgouros J.G."/>
            <person name="Peat N."/>
            <person name="Hayles J."/>
            <person name="Baker S.G."/>
            <person name="Basham D."/>
            <person name="Bowman S."/>
            <person name="Brooks K."/>
            <person name="Brown D."/>
            <person name="Brown S."/>
            <person name="Chillingworth T."/>
            <person name="Churcher C.M."/>
            <person name="Collins M."/>
            <person name="Connor R."/>
            <person name="Cronin A."/>
            <person name="Davis P."/>
            <person name="Feltwell T."/>
            <person name="Fraser A."/>
            <person name="Gentles S."/>
            <person name="Goble A."/>
            <person name="Hamlin N."/>
            <person name="Harris D.E."/>
            <person name="Hidalgo J."/>
            <person name="Hodgson G."/>
            <person name="Holroyd S."/>
            <person name="Hornsby T."/>
            <person name="Howarth S."/>
            <person name="Huckle E.J."/>
            <person name="Hunt S."/>
            <person name="Jagels K."/>
            <person name="James K.D."/>
            <person name="Jones L."/>
            <person name="Jones M."/>
            <person name="Leather S."/>
            <person name="McDonald S."/>
            <person name="McLean J."/>
            <person name="Mooney P."/>
            <person name="Moule S."/>
            <person name="Mungall K.L."/>
            <person name="Murphy L.D."/>
            <person name="Niblett D."/>
            <person name="Odell C."/>
            <person name="Oliver K."/>
            <person name="O'Neil S."/>
            <person name="Pearson D."/>
            <person name="Quail M.A."/>
            <person name="Rabbinowitsch E."/>
            <person name="Rutherford K.M."/>
            <person name="Rutter S."/>
            <person name="Saunders D."/>
            <person name="Seeger K."/>
            <person name="Sharp S."/>
            <person name="Skelton J."/>
            <person name="Simmonds M.N."/>
            <person name="Squares R."/>
            <person name="Squares S."/>
            <person name="Stevens K."/>
            <person name="Taylor K."/>
            <person name="Taylor R.G."/>
            <person name="Tivey A."/>
            <person name="Walsh S.V."/>
            <person name="Warren T."/>
            <person name="Whitehead S."/>
            <person name="Woodward J.R."/>
            <person name="Volckaert G."/>
            <person name="Aert R."/>
            <person name="Robben J."/>
            <person name="Grymonprez B."/>
            <person name="Weltjens I."/>
            <person name="Vanstreels E."/>
            <person name="Rieger M."/>
            <person name="Schaefer M."/>
            <person name="Mueller-Auer S."/>
            <person name="Gabel C."/>
            <person name="Fuchs M."/>
            <person name="Duesterhoeft A."/>
            <person name="Fritzc C."/>
            <person name="Holzer E."/>
            <person name="Moestl D."/>
            <person name="Hilbert H."/>
            <person name="Borzym K."/>
            <person name="Langer I."/>
            <person name="Beck A."/>
            <person name="Lehrach H."/>
            <person name="Reinhardt R."/>
            <person name="Pohl T.M."/>
            <person name="Eger P."/>
            <person name="Zimmermann W."/>
            <person name="Wedler H."/>
            <person name="Wambutt R."/>
            <person name="Purnelle B."/>
            <person name="Goffeau A."/>
            <person name="Cadieu E."/>
            <person name="Dreano S."/>
            <person name="Gloux S."/>
            <person name="Lelaure V."/>
            <person name="Mottier S."/>
            <person name="Galibert F."/>
            <person name="Aves S.J."/>
            <person name="Xiang Z."/>
            <person name="Hunt C."/>
            <person name="Moore K."/>
            <person name="Hurst S.M."/>
            <person name="Lucas M."/>
            <person name="Rochet M."/>
            <person name="Gaillardin C."/>
            <person name="Tallada V.A."/>
            <person name="Garzon A."/>
            <person name="Thode G."/>
            <person name="Daga R.R."/>
            <person name="Cruzado L."/>
            <person name="Jimenez J."/>
            <person name="Sanchez M."/>
            <person name="del Rey F."/>
            <person name="Benito J."/>
            <person name="Dominguez A."/>
            <person name="Revuelta J.L."/>
            <person name="Moreno S."/>
            <person name="Armstrong J."/>
            <person name="Forsburg S.L."/>
            <person name="Cerutti L."/>
            <person name="Lowe T."/>
            <person name="McCombie W.R."/>
            <person name="Paulsen I."/>
            <person name="Potashkin J."/>
            <person name="Shpakovski G.V."/>
            <person name="Ussery D."/>
            <person name="Barrell B.G."/>
            <person name="Nurse P."/>
        </authorList>
    </citation>
    <scope>NUCLEOTIDE SEQUENCE [LARGE SCALE GENOMIC DNA]</scope>
    <source>
        <strain>972 / ATCC 24843</strain>
    </source>
</reference>
<reference key="2">
    <citation type="journal article" date="2006" name="Nat. Biotechnol.">
        <title>ORFeome cloning and global analysis of protein localization in the fission yeast Schizosaccharomyces pombe.</title>
        <authorList>
            <person name="Matsuyama A."/>
            <person name="Arai R."/>
            <person name="Yashiroda Y."/>
            <person name="Shirai A."/>
            <person name="Kamata A."/>
            <person name="Sekido S."/>
            <person name="Kobayashi Y."/>
            <person name="Hashimoto A."/>
            <person name="Hamamoto M."/>
            <person name="Hiraoka Y."/>
            <person name="Horinouchi S."/>
            <person name="Yoshida M."/>
        </authorList>
    </citation>
    <scope>SUBCELLULAR LOCATION [LARGE SCALE ANALYSIS]</scope>
</reference>
<comment type="subcellular location">
    <subcellularLocation>
        <location evidence="1">Cytoplasm</location>
    </subcellularLocation>
    <subcellularLocation>
        <location evidence="1">Nucleus</location>
    </subcellularLocation>
</comment>
<comment type="similarity">
    <text evidence="2">Belongs to the zinc-containing alcohol dehydrogenase family. Quinone oxidoreductase subfamily.</text>
</comment>
<feature type="chain" id="PRO_0000339118" description="Zinc-type alcohol dehydrogenase-like protein PB24D3.08c">
    <location>
        <begin position="1"/>
        <end position="349"/>
    </location>
</feature>
<dbReference type="EC" id="1.-.-.-"/>
<dbReference type="EMBL" id="CU329670">
    <property type="protein sequence ID" value="CAC36904.1"/>
    <property type="molecule type" value="Genomic_DNA"/>
</dbReference>
<dbReference type="RefSeq" id="NP_593994.1">
    <property type="nucleotide sequence ID" value="NM_001019420.2"/>
</dbReference>
<dbReference type="SMR" id="Q9C0Y6"/>
<dbReference type="BioGRID" id="279940">
    <property type="interactions" value="12"/>
</dbReference>
<dbReference type="FunCoup" id="Q9C0Y6">
    <property type="interactions" value="70"/>
</dbReference>
<dbReference type="STRING" id="284812.Q9C0Y6"/>
<dbReference type="iPTMnet" id="Q9C0Y6"/>
<dbReference type="PaxDb" id="4896-SPAPB24D3.08c.1"/>
<dbReference type="EnsemblFungi" id="SPAPB24D3.08c.1">
    <property type="protein sequence ID" value="SPAPB24D3.08c.1:pep"/>
    <property type="gene ID" value="SPAPB24D3.08c"/>
</dbReference>
<dbReference type="KEGG" id="spo:2543522"/>
<dbReference type="PomBase" id="SPAPB24D3.08c"/>
<dbReference type="VEuPathDB" id="FungiDB:SPAPB24D3.08c"/>
<dbReference type="eggNOG" id="KOG1196">
    <property type="taxonomic scope" value="Eukaryota"/>
</dbReference>
<dbReference type="HOGENOM" id="CLU_026673_29_1_1"/>
<dbReference type="InParanoid" id="Q9C0Y6"/>
<dbReference type="OMA" id="WMSDIPQ"/>
<dbReference type="PhylomeDB" id="Q9C0Y6"/>
<dbReference type="PRO" id="PR:Q9C0Y6"/>
<dbReference type="Proteomes" id="UP000002485">
    <property type="component" value="Chromosome I"/>
</dbReference>
<dbReference type="GO" id="GO:0005829">
    <property type="term" value="C:cytosol"/>
    <property type="evidence" value="ECO:0007005"/>
    <property type="project" value="PomBase"/>
</dbReference>
<dbReference type="GO" id="GO:0005634">
    <property type="term" value="C:nucleus"/>
    <property type="evidence" value="ECO:0007005"/>
    <property type="project" value="PomBase"/>
</dbReference>
<dbReference type="GO" id="GO:0016628">
    <property type="term" value="F:oxidoreductase activity, acting on the CH-CH group of donors, NAD or NADP as acceptor"/>
    <property type="evidence" value="ECO:0007669"/>
    <property type="project" value="InterPro"/>
</dbReference>
<dbReference type="CDD" id="cd05288">
    <property type="entry name" value="PGDH"/>
    <property type="match status" value="1"/>
</dbReference>
<dbReference type="FunFam" id="3.40.50.720:FF:000121">
    <property type="entry name" value="Prostaglandin reductase 2"/>
    <property type="match status" value="1"/>
</dbReference>
<dbReference type="Gene3D" id="3.90.180.10">
    <property type="entry name" value="Medium-chain alcohol dehydrogenases, catalytic domain"/>
    <property type="match status" value="1"/>
</dbReference>
<dbReference type="Gene3D" id="3.40.50.720">
    <property type="entry name" value="NAD(P)-binding Rossmann-like Domain"/>
    <property type="match status" value="1"/>
</dbReference>
<dbReference type="InterPro" id="IPR013149">
    <property type="entry name" value="ADH-like_C"/>
</dbReference>
<dbReference type="InterPro" id="IPR041694">
    <property type="entry name" value="ADH_N_2"/>
</dbReference>
<dbReference type="InterPro" id="IPR011032">
    <property type="entry name" value="GroES-like_sf"/>
</dbReference>
<dbReference type="InterPro" id="IPR045010">
    <property type="entry name" value="MDR_fam"/>
</dbReference>
<dbReference type="InterPro" id="IPR036291">
    <property type="entry name" value="NAD(P)-bd_dom_sf"/>
</dbReference>
<dbReference type="InterPro" id="IPR020843">
    <property type="entry name" value="PKS_ER"/>
</dbReference>
<dbReference type="PANTHER" id="PTHR43205">
    <property type="entry name" value="PROSTAGLANDIN REDUCTASE"/>
    <property type="match status" value="1"/>
</dbReference>
<dbReference type="PANTHER" id="PTHR43205:SF7">
    <property type="entry name" value="PROSTAGLANDIN REDUCTASE 1"/>
    <property type="match status" value="1"/>
</dbReference>
<dbReference type="Pfam" id="PF16884">
    <property type="entry name" value="ADH_N_2"/>
    <property type="match status" value="1"/>
</dbReference>
<dbReference type="Pfam" id="PF00107">
    <property type="entry name" value="ADH_zinc_N"/>
    <property type="match status" value="1"/>
</dbReference>
<dbReference type="SMART" id="SM00829">
    <property type="entry name" value="PKS_ER"/>
    <property type="match status" value="1"/>
</dbReference>
<dbReference type="SUPFAM" id="SSF50129">
    <property type="entry name" value="GroES-like"/>
    <property type="match status" value="2"/>
</dbReference>
<dbReference type="SUPFAM" id="SSF51735">
    <property type="entry name" value="NAD(P)-binding Rossmann-fold domains"/>
    <property type="match status" value="1"/>
</dbReference>
<protein>
    <recommendedName>
        <fullName>Zinc-type alcohol dehydrogenase-like protein PB24D3.08c</fullName>
        <ecNumber>1.-.-.-</ecNumber>
    </recommendedName>
</protein>
<evidence type="ECO:0000269" key="1">
    <source>
    </source>
</evidence>
<evidence type="ECO:0000305" key="2"/>
<proteinExistence type="inferred from homology"/>
<sequence length="349" mass="38613">MVSNNAVIIKKYLDSTAGYPVIGEHLAFEKREFDLENAQVDEETPVLLKNIYTSVDPYLRMRMQSPKHASYIPPLELGKPFYNSTVAKVVKSTLDQYKPGMDVVFVSGWEEYTFVSKQALGFLQPINNPYKLPLIDFVGSLGMPSQTAYCGLKHIGKPKAGETIYISAASGAVGQMAGQLAKAMGLHVVGSVGSDEKFKICLDSGYDSVFNYKKESPFKALPRLCPKGIDIYFENVGGETMDAVLENMNLQGRIIFCGAISQYNNPNPYRVKNLGMVLVKSLTIQGFIVANILPQYQEQYFEEMPKLIAEGKIKYKCDVYDGLESAPEAFIGMLQGKNSGKTIVKIADE</sequence>
<accession>Q9C0Y6</accession>
<gene>
    <name type="ORF">SPAPB24D3.08c</name>
</gene>
<name>YKM8_SCHPO</name>